<name>PSBT_LIRTU</name>
<evidence type="ECO:0000255" key="1">
    <source>
        <dbReference type="HAMAP-Rule" id="MF_00808"/>
    </source>
</evidence>
<evidence type="ECO:0000305" key="2"/>
<protein>
    <recommendedName>
        <fullName evidence="1">Photosystem II reaction center protein T</fullName>
        <shortName evidence="1">PSII-T</shortName>
    </recommendedName>
</protein>
<comment type="function">
    <text evidence="1">Found at the monomer-monomer interface of the photosystem II (PS II) dimer, plays a role in assembly and dimerization of PSII. PSII is a light-driven water plastoquinone oxidoreductase, using light energy to abstract electrons from H(2)O, generating a proton gradient subsequently used for ATP formation.</text>
</comment>
<comment type="subunit">
    <text evidence="1">PSII is composed of 1 copy each of membrane proteins PsbA, PsbB, PsbC, PsbD, PsbE, PsbF, PsbH, PsbI, PsbJ, PsbK, PsbL, PsbM, PsbT, PsbY, PsbZ, Psb30/Ycf12, at least 3 peripheral proteins of the oxygen-evolving complex and a large number of cofactors. It forms dimeric complexes.</text>
</comment>
<comment type="subcellular location">
    <subcellularLocation>
        <location evidence="1">Plastid</location>
        <location evidence="1">Chloroplast thylakoid membrane</location>
        <topology evidence="1">Single-pass membrane protein</topology>
    </subcellularLocation>
</comment>
<comment type="similarity">
    <text evidence="1">Belongs to the PsbT family.</text>
</comment>
<comment type="sequence caution" evidence="2">
    <conflict type="erroneous initiation">
        <sequence resource="EMBL-CDS" id="ABI32536"/>
    </conflict>
    <text>Extended N-terminus.</text>
</comment>
<dbReference type="EMBL" id="AF123855">
    <property type="protein sequence ID" value="AAG26298.1"/>
    <property type="molecule type" value="Genomic_DNA"/>
</dbReference>
<dbReference type="EMBL" id="AY727370">
    <property type="protein sequence ID" value="AAW56502.1"/>
    <property type="molecule type" value="Genomic_DNA"/>
</dbReference>
<dbReference type="EMBL" id="DQ899947">
    <property type="protein sequence ID" value="ABI32536.1"/>
    <property type="status" value="ALT_INIT"/>
    <property type="molecule type" value="Genomic_DNA"/>
</dbReference>
<dbReference type="RefSeq" id="YP_740229.1">
    <property type="nucleotide sequence ID" value="NC_008326.1"/>
</dbReference>
<dbReference type="SMR" id="Q7J188"/>
<dbReference type="GeneID" id="4266653"/>
<dbReference type="GO" id="GO:0009535">
    <property type="term" value="C:chloroplast thylakoid membrane"/>
    <property type="evidence" value="ECO:0007669"/>
    <property type="project" value="UniProtKB-SubCell"/>
</dbReference>
<dbReference type="GO" id="GO:0009539">
    <property type="term" value="C:photosystem II reaction center"/>
    <property type="evidence" value="ECO:0007669"/>
    <property type="project" value="InterPro"/>
</dbReference>
<dbReference type="GO" id="GO:0015979">
    <property type="term" value="P:photosynthesis"/>
    <property type="evidence" value="ECO:0007669"/>
    <property type="project" value="UniProtKB-UniRule"/>
</dbReference>
<dbReference type="HAMAP" id="MF_00808">
    <property type="entry name" value="PSII_PsbT"/>
    <property type="match status" value="1"/>
</dbReference>
<dbReference type="InterPro" id="IPR001743">
    <property type="entry name" value="PSII_PsbT"/>
</dbReference>
<dbReference type="InterPro" id="IPR037268">
    <property type="entry name" value="PSII_PsbT_sf"/>
</dbReference>
<dbReference type="PANTHER" id="PTHR36411">
    <property type="match status" value="1"/>
</dbReference>
<dbReference type="PANTHER" id="PTHR36411:SF2">
    <property type="entry name" value="PHOTOSYSTEM II REACTION CENTER PROTEIN T"/>
    <property type="match status" value="1"/>
</dbReference>
<dbReference type="Pfam" id="PF01405">
    <property type="entry name" value="PsbT"/>
    <property type="match status" value="1"/>
</dbReference>
<dbReference type="SUPFAM" id="SSF161029">
    <property type="entry name" value="Photosystem II reaction center protein T, PsbT"/>
    <property type="match status" value="1"/>
</dbReference>
<keyword id="KW-0150">Chloroplast</keyword>
<keyword id="KW-0472">Membrane</keyword>
<keyword id="KW-0602">Photosynthesis</keyword>
<keyword id="KW-0604">Photosystem II</keyword>
<keyword id="KW-0934">Plastid</keyword>
<keyword id="KW-0793">Thylakoid</keyword>
<keyword id="KW-0812">Transmembrane</keyword>
<keyword id="KW-1133">Transmembrane helix</keyword>
<feature type="chain" id="PRO_0000217944" description="Photosystem II reaction center protein T">
    <location>
        <begin position="1"/>
        <end position="35"/>
    </location>
</feature>
<feature type="transmembrane region" description="Helical" evidence="1">
    <location>
        <begin position="3"/>
        <end position="23"/>
    </location>
</feature>
<reference key="1">
    <citation type="journal article" date="2000" name="Am. J. Bot.">
        <title>Utility of 17 chloroplast genes for inferring the phylogeny of the basal angiosperms.</title>
        <authorList>
            <person name="Graham S.W."/>
            <person name="Olmstead R.G."/>
        </authorList>
    </citation>
    <scope>NUCLEOTIDE SEQUENCE [GENOMIC DNA]</scope>
</reference>
<reference key="2">
    <citation type="journal article" date="2005" name="Am. J. Bot.">
        <title>The tortoise and the hare II: relative utility of 21 noncoding chloroplast DNA sequences for phylogenetic analysis.</title>
        <authorList>
            <person name="Shaw J."/>
            <person name="Lickey E.B."/>
            <person name="Beck J.T."/>
            <person name="Farmer S.B."/>
            <person name="Liu W."/>
            <person name="Miller J."/>
            <person name="Siripun K.C."/>
            <person name="Winder C.T."/>
            <person name="Schilling E.E."/>
            <person name="Small R.L."/>
        </authorList>
        <dbReference type="AGRICOLA" id="IND43689705"/>
    </citation>
    <scope>NUCLEOTIDE SEQUENCE [GENOMIC DNA]</scope>
</reference>
<reference key="3">
    <citation type="journal article" date="2006" name="BMC Evol. Biol.">
        <title>Complete plastid genome sequences of Drimys, Liriodendron, and Piper: implications for the phylogenetic relationships of magnoliids.</title>
        <authorList>
            <person name="Cai Z."/>
            <person name="Penaflor C."/>
            <person name="Kuehl J.V."/>
            <person name="Leebens-Mack J."/>
            <person name="Carlson J.E."/>
            <person name="dePamphilis C.W."/>
            <person name="Boore J.L."/>
            <person name="Jansen R.K."/>
        </authorList>
    </citation>
    <scope>NUCLEOTIDE SEQUENCE [LARGE SCALE GENOMIC DNA]</scope>
</reference>
<geneLocation type="chloroplast"/>
<sequence length="35" mass="4077">MEALVYTFLLVSTLGIIFFAIFFREPPKVPTKKMK</sequence>
<organism>
    <name type="scientific">Liriodendron tulipifera</name>
    <name type="common">Tuliptree</name>
    <name type="synonym">Tulip poplar</name>
    <dbReference type="NCBI Taxonomy" id="3415"/>
    <lineage>
        <taxon>Eukaryota</taxon>
        <taxon>Viridiplantae</taxon>
        <taxon>Streptophyta</taxon>
        <taxon>Embryophyta</taxon>
        <taxon>Tracheophyta</taxon>
        <taxon>Spermatophyta</taxon>
        <taxon>Magnoliopsida</taxon>
        <taxon>Magnoliidae</taxon>
        <taxon>Magnoliales</taxon>
        <taxon>Magnoliaceae</taxon>
        <taxon>Liriodendron</taxon>
    </lineage>
</organism>
<gene>
    <name evidence="1" type="primary">psbT</name>
</gene>
<accession>Q7J188</accession>
<accession>Q0G9J2</accession>
<proteinExistence type="inferred from homology"/>